<feature type="chain" id="PRO_1000139027" description="Acyl carrier protein">
    <location>
        <begin position="1"/>
        <end position="78"/>
    </location>
</feature>
<feature type="domain" description="Carrier" evidence="2">
    <location>
        <begin position="2"/>
        <end position="77"/>
    </location>
</feature>
<feature type="modified residue" description="O-(pantetheine 4'-phosphoryl)serine" evidence="2">
    <location>
        <position position="37"/>
    </location>
</feature>
<proteinExistence type="inferred from homology"/>
<protein>
    <recommendedName>
        <fullName evidence="1">Acyl carrier protein</fullName>
        <shortName evidence="1">ACP</shortName>
    </recommendedName>
</protein>
<evidence type="ECO:0000255" key="1">
    <source>
        <dbReference type="HAMAP-Rule" id="MF_01217"/>
    </source>
</evidence>
<evidence type="ECO:0000255" key="2">
    <source>
        <dbReference type="PROSITE-ProRule" id="PRU00258"/>
    </source>
</evidence>
<comment type="function">
    <text evidence="1">Carrier of the growing fatty acid chain in fatty acid biosynthesis.</text>
</comment>
<comment type="pathway">
    <text evidence="1">Lipid metabolism; fatty acid biosynthesis.</text>
</comment>
<comment type="subcellular location">
    <subcellularLocation>
        <location evidence="1">Cytoplasm</location>
    </subcellularLocation>
</comment>
<comment type="PTM">
    <text evidence="1">4'-phosphopantetheine is transferred from CoA to a specific serine of apo-ACP by AcpS. This modification is essential for activity because fatty acids are bound in thioester linkage to the sulfhydryl of the prosthetic group.</text>
</comment>
<comment type="similarity">
    <text evidence="1">Belongs to the acyl carrier protein (ACP) family.</text>
</comment>
<organism>
    <name type="scientific">Erwinia tasmaniensis (strain DSM 17950 / CFBP 7177 / CIP 109463 / NCPPB 4357 / Et1/99)</name>
    <dbReference type="NCBI Taxonomy" id="465817"/>
    <lineage>
        <taxon>Bacteria</taxon>
        <taxon>Pseudomonadati</taxon>
        <taxon>Pseudomonadota</taxon>
        <taxon>Gammaproteobacteria</taxon>
        <taxon>Enterobacterales</taxon>
        <taxon>Erwiniaceae</taxon>
        <taxon>Erwinia</taxon>
    </lineage>
</organism>
<sequence>MSTIEERVKKIIGEQLGVKQEEVVNTASFVEDLGADSLDTVELVMALEEEFDTEIPDEEAEKITTVQAAIDYINGHQA</sequence>
<name>ACP_ERWT9</name>
<keyword id="KW-0963">Cytoplasm</keyword>
<keyword id="KW-0275">Fatty acid biosynthesis</keyword>
<keyword id="KW-0276">Fatty acid metabolism</keyword>
<keyword id="KW-0444">Lipid biosynthesis</keyword>
<keyword id="KW-0443">Lipid metabolism</keyword>
<keyword id="KW-0596">Phosphopantetheine</keyword>
<keyword id="KW-0597">Phosphoprotein</keyword>
<keyword id="KW-1185">Reference proteome</keyword>
<accession>B2VDK4</accession>
<reference key="1">
    <citation type="journal article" date="2008" name="Environ. Microbiol.">
        <title>The genome of Erwinia tasmaniensis strain Et1/99, a non-pathogenic bacterium in the genus Erwinia.</title>
        <authorList>
            <person name="Kube M."/>
            <person name="Migdoll A.M."/>
            <person name="Mueller I."/>
            <person name="Kuhl H."/>
            <person name="Beck A."/>
            <person name="Reinhardt R."/>
            <person name="Geider K."/>
        </authorList>
    </citation>
    <scope>NUCLEOTIDE SEQUENCE [LARGE SCALE GENOMIC DNA]</scope>
    <source>
        <strain>DSM 17950 / CFBP 7177 / CIP 109463 / NCPPB 4357 / Et1/99</strain>
    </source>
</reference>
<dbReference type="EMBL" id="CU468135">
    <property type="protein sequence ID" value="CAO97067.1"/>
    <property type="molecule type" value="Genomic_DNA"/>
</dbReference>
<dbReference type="RefSeq" id="WP_004157115.1">
    <property type="nucleotide sequence ID" value="NC_010694.1"/>
</dbReference>
<dbReference type="SMR" id="B2VDK4"/>
<dbReference type="STRING" id="465817.ETA_20210"/>
<dbReference type="GeneID" id="97605763"/>
<dbReference type="KEGG" id="eta:ETA_20210"/>
<dbReference type="eggNOG" id="COG0236">
    <property type="taxonomic scope" value="Bacteria"/>
</dbReference>
<dbReference type="HOGENOM" id="CLU_108696_5_1_6"/>
<dbReference type="OrthoDB" id="9804551at2"/>
<dbReference type="UniPathway" id="UPA00094"/>
<dbReference type="Proteomes" id="UP000001726">
    <property type="component" value="Chromosome"/>
</dbReference>
<dbReference type="GO" id="GO:0005829">
    <property type="term" value="C:cytosol"/>
    <property type="evidence" value="ECO:0007669"/>
    <property type="project" value="TreeGrafter"/>
</dbReference>
<dbReference type="GO" id="GO:0016020">
    <property type="term" value="C:membrane"/>
    <property type="evidence" value="ECO:0007669"/>
    <property type="project" value="GOC"/>
</dbReference>
<dbReference type="GO" id="GO:0000035">
    <property type="term" value="F:acyl binding"/>
    <property type="evidence" value="ECO:0007669"/>
    <property type="project" value="TreeGrafter"/>
</dbReference>
<dbReference type="GO" id="GO:0000036">
    <property type="term" value="F:acyl carrier activity"/>
    <property type="evidence" value="ECO:0007669"/>
    <property type="project" value="UniProtKB-UniRule"/>
</dbReference>
<dbReference type="GO" id="GO:0009245">
    <property type="term" value="P:lipid A biosynthetic process"/>
    <property type="evidence" value="ECO:0007669"/>
    <property type="project" value="TreeGrafter"/>
</dbReference>
<dbReference type="FunFam" id="1.10.1200.10:FF:000001">
    <property type="entry name" value="Acyl carrier protein"/>
    <property type="match status" value="1"/>
</dbReference>
<dbReference type="Gene3D" id="1.10.1200.10">
    <property type="entry name" value="ACP-like"/>
    <property type="match status" value="1"/>
</dbReference>
<dbReference type="HAMAP" id="MF_01217">
    <property type="entry name" value="Acyl_carrier"/>
    <property type="match status" value="1"/>
</dbReference>
<dbReference type="InterPro" id="IPR003231">
    <property type="entry name" value="ACP"/>
</dbReference>
<dbReference type="InterPro" id="IPR036736">
    <property type="entry name" value="ACP-like_sf"/>
</dbReference>
<dbReference type="InterPro" id="IPR009081">
    <property type="entry name" value="PP-bd_ACP"/>
</dbReference>
<dbReference type="InterPro" id="IPR006162">
    <property type="entry name" value="Ppantetheine_attach_site"/>
</dbReference>
<dbReference type="NCBIfam" id="TIGR00517">
    <property type="entry name" value="acyl_carrier"/>
    <property type="match status" value="1"/>
</dbReference>
<dbReference type="NCBIfam" id="NF002148">
    <property type="entry name" value="PRK00982.1-2"/>
    <property type="match status" value="1"/>
</dbReference>
<dbReference type="NCBIfam" id="NF002149">
    <property type="entry name" value="PRK00982.1-3"/>
    <property type="match status" value="1"/>
</dbReference>
<dbReference type="NCBIfam" id="NF002150">
    <property type="entry name" value="PRK00982.1-4"/>
    <property type="match status" value="1"/>
</dbReference>
<dbReference type="NCBIfam" id="NF002151">
    <property type="entry name" value="PRK00982.1-5"/>
    <property type="match status" value="1"/>
</dbReference>
<dbReference type="PANTHER" id="PTHR20863">
    <property type="entry name" value="ACYL CARRIER PROTEIN"/>
    <property type="match status" value="1"/>
</dbReference>
<dbReference type="PANTHER" id="PTHR20863:SF76">
    <property type="entry name" value="CARRIER DOMAIN-CONTAINING PROTEIN"/>
    <property type="match status" value="1"/>
</dbReference>
<dbReference type="Pfam" id="PF00550">
    <property type="entry name" value="PP-binding"/>
    <property type="match status" value="1"/>
</dbReference>
<dbReference type="SUPFAM" id="SSF47336">
    <property type="entry name" value="ACP-like"/>
    <property type="match status" value="1"/>
</dbReference>
<dbReference type="PROSITE" id="PS50075">
    <property type="entry name" value="CARRIER"/>
    <property type="match status" value="1"/>
</dbReference>
<dbReference type="PROSITE" id="PS00012">
    <property type="entry name" value="PHOSPHOPANTETHEINE"/>
    <property type="match status" value="1"/>
</dbReference>
<gene>
    <name evidence="1" type="primary">acpP</name>
    <name type="ordered locus">ETA_20210</name>
</gene>